<evidence type="ECO:0000250" key="1">
    <source>
        <dbReference type="UniProtKB" id="C4R941"/>
    </source>
</evidence>
<evidence type="ECO:0000250" key="2">
    <source>
        <dbReference type="UniProtKB" id="P46976"/>
    </source>
</evidence>
<evidence type="ECO:0000250" key="3">
    <source>
        <dbReference type="UniProtKB" id="Q9R062"/>
    </source>
</evidence>
<evidence type="ECO:0000269" key="4">
    <source>
    </source>
</evidence>
<evidence type="ECO:0000269" key="5">
    <source>
    </source>
</evidence>
<evidence type="ECO:0000269" key="6">
    <source>
    </source>
</evidence>
<evidence type="ECO:0000269" key="7">
    <source>
    </source>
</evidence>
<evidence type="ECO:0000269" key="8">
    <source>
    </source>
</evidence>
<evidence type="ECO:0000269" key="9">
    <source>
    </source>
</evidence>
<evidence type="ECO:0000269" key="10">
    <source>
    </source>
</evidence>
<evidence type="ECO:0000269" key="11">
    <source>
    </source>
</evidence>
<evidence type="ECO:0000269" key="12">
    <source>
    </source>
</evidence>
<evidence type="ECO:0000269" key="13">
    <source>
    </source>
</evidence>
<evidence type="ECO:0000269" key="14">
    <source>
    </source>
</evidence>
<evidence type="ECO:0000269" key="15">
    <source>
    </source>
</evidence>
<evidence type="ECO:0000305" key="16"/>
<evidence type="ECO:0007744" key="17">
    <source>
        <dbReference type="PDB" id="1LL0"/>
    </source>
</evidence>
<evidence type="ECO:0007744" key="18">
    <source>
        <dbReference type="PDB" id="1LL2"/>
    </source>
</evidence>
<evidence type="ECO:0007744" key="19">
    <source>
        <dbReference type="PDB" id="1LL3"/>
    </source>
</evidence>
<evidence type="ECO:0007744" key="20">
    <source>
        <dbReference type="PDB" id="1ZCT"/>
    </source>
</evidence>
<evidence type="ECO:0007744" key="21">
    <source>
        <dbReference type="PDB" id="1ZCU"/>
    </source>
</evidence>
<evidence type="ECO:0007744" key="22">
    <source>
        <dbReference type="PDB" id="1ZCV"/>
    </source>
</evidence>
<evidence type="ECO:0007744" key="23">
    <source>
        <dbReference type="PDB" id="1ZCY"/>
    </source>
</evidence>
<evidence type="ECO:0007744" key="24">
    <source>
        <dbReference type="PDB" id="1ZDF"/>
    </source>
</evidence>
<evidence type="ECO:0007744" key="25">
    <source>
        <dbReference type="PDB" id="1ZDG"/>
    </source>
</evidence>
<evidence type="ECO:0007744" key="26">
    <source>
        <dbReference type="PDB" id="3USQ"/>
    </source>
</evidence>
<evidence type="ECO:0007744" key="27">
    <source>
        <dbReference type="PDB" id="3USR"/>
    </source>
</evidence>
<evidence type="ECO:0007744" key="28">
    <source>
        <dbReference type="PDB" id="3V8Y"/>
    </source>
</evidence>
<evidence type="ECO:0007744" key="29">
    <source>
        <dbReference type="PDB" id="3V8Z"/>
    </source>
</evidence>
<evidence type="ECO:0007744" key="30">
    <source>
        <dbReference type="PDB" id="3V90"/>
    </source>
</evidence>
<evidence type="ECO:0007744" key="31">
    <source>
        <dbReference type="PDB" id="3V91"/>
    </source>
</evidence>
<evidence type="ECO:0007829" key="32">
    <source>
        <dbReference type="PDB" id="1LL2"/>
    </source>
</evidence>
<evidence type="ECO:0007829" key="33">
    <source>
        <dbReference type="PDB" id="1LL3"/>
    </source>
</evidence>
<evidence type="ECO:0007829" key="34">
    <source>
        <dbReference type="PDB" id="1ZCV"/>
    </source>
</evidence>
<evidence type="ECO:0007829" key="35">
    <source>
        <dbReference type="PDB" id="1ZCY"/>
    </source>
</evidence>
<evidence type="ECO:0007829" key="36">
    <source>
        <dbReference type="PDB" id="3USR"/>
    </source>
</evidence>
<sequence length="333" mass="37397">MTDQAFVTLTTNDAYAKGALVLGSSLKQHRTSRRLAVLTTPQVSDTMRKALEIVFDEVITVDILDSGDSAHLTLMKRPELGVTLTKLHCWSLTQYSKCVFMDADTLVLANIDDLFEREELSAAPDPGWPDCFNSGVFVYQPSVETYNQLLHVASEQGSFDGGDQGLLNTFFNSWATTDIRKHLPFIYNLSSISIYSYLPAFKAFGANAKVVHFLGQTKPWNYTYDTKTKSVRSEGHDPTMTHPQFLNVWWDIFTTSVVPLLQQFGLVQDTCSYQHVEDVSGAVSHLSLGETPATTQPFVSSEERKERWEQGQADYMGADSFDNIKKKLDTYLQ</sequence>
<gene>
    <name type="primary">GYG1</name>
    <name type="synonym">GYG</name>
</gene>
<accession>P13280</accession>
<name>GLYG_RABIT</name>
<keyword id="KW-0002">3D-structure</keyword>
<keyword id="KW-0007">Acetylation</keyword>
<keyword id="KW-0963">Cytoplasm</keyword>
<keyword id="KW-0903">Direct protein sequencing</keyword>
<keyword id="KW-0320">Glycogen biosynthesis</keyword>
<keyword id="KW-0325">Glycoprotein</keyword>
<keyword id="KW-0464">Manganese</keyword>
<keyword id="KW-0479">Metal-binding</keyword>
<keyword id="KW-0539">Nucleus</keyword>
<keyword id="KW-0597">Phosphoprotein</keyword>
<keyword id="KW-1185">Reference proteome</keyword>
<keyword id="KW-0808">Transferase</keyword>
<organism>
    <name type="scientific">Oryctolagus cuniculus</name>
    <name type="common">Rabbit</name>
    <dbReference type="NCBI Taxonomy" id="9986"/>
    <lineage>
        <taxon>Eukaryota</taxon>
        <taxon>Metazoa</taxon>
        <taxon>Chordata</taxon>
        <taxon>Craniata</taxon>
        <taxon>Vertebrata</taxon>
        <taxon>Euteleostomi</taxon>
        <taxon>Mammalia</taxon>
        <taxon>Eutheria</taxon>
        <taxon>Euarchontoglires</taxon>
        <taxon>Glires</taxon>
        <taxon>Lagomorpha</taxon>
        <taxon>Leporidae</taxon>
        <taxon>Oryctolagus</taxon>
    </lineage>
</organism>
<feature type="initiator methionine" description="Removed" evidence="11">
    <location>
        <position position="1"/>
    </location>
</feature>
<feature type="chain" id="PRO_0000215178" description="Glycogenin-1" evidence="16">
    <location>
        <begin position="2"/>
        <end position="333"/>
    </location>
</feature>
<feature type="region of interest" description="Interaction with GYS1" evidence="2">
    <location>
        <begin position="284"/>
        <end position="316"/>
    </location>
</feature>
<feature type="binding site" evidence="7 9 20 29">
    <location>
        <position position="9"/>
    </location>
    <ligand>
        <name>UDP</name>
        <dbReference type="ChEBI" id="CHEBI:58223"/>
    </ligand>
</feature>
<feature type="binding site" evidence="5 7 9 18 24 25 31">
    <location>
        <position position="9"/>
    </location>
    <ligand>
        <name>UDP-alpha-D-glucose</name>
        <dbReference type="ChEBI" id="CHEBI:58885"/>
    </ligand>
</feature>
<feature type="binding site" evidence="7 9 20 29">
    <location>
        <position position="11"/>
    </location>
    <ligand>
        <name>UDP</name>
        <dbReference type="ChEBI" id="CHEBI:58223"/>
    </ligand>
</feature>
<feature type="binding site" evidence="5 7 9 18 24 25 31">
    <location>
        <position position="11"/>
    </location>
    <ligand>
        <name>UDP-alpha-D-glucose</name>
        <dbReference type="ChEBI" id="CHEBI:58885"/>
    </ligand>
</feature>
<feature type="binding site" evidence="2">
    <location>
        <position position="12"/>
    </location>
    <ligand>
        <name>UDP</name>
        <dbReference type="ChEBI" id="CHEBI:58223"/>
    </ligand>
</feature>
<feature type="binding site" evidence="5 7 18 25">
    <location>
        <position position="12"/>
    </location>
    <ligand>
        <name>UDP-alpha-D-glucose</name>
        <dbReference type="ChEBI" id="CHEBI:58885"/>
    </ligand>
</feature>
<feature type="binding site" evidence="7 9 20 29">
    <location>
        <position position="15"/>
    </location>
    <ligand>
        <name>UDP</name>
        <dbReference type="ChEBI" id="CHEBI:58223"/>
    </ligand>
</feature>
<feature type="binding site" evidence="5 7 9 18 24 25 31">
    <location>
        <position position="15"/>
    </location>
    <ligand>
        <name>UDP-alpha-D-glucose</name>
        <dbReference type="ChEBI" id="CHEBI:58885"/>
    </ligand>
</feature>
<feature type="binding site" evidence="2">
    <location>
        <position position="77"/>
    </location>
    <ligand>
        <name>UDP</name>
        <dbReference type="ChEBI" id="CHEBI:58223"/>
    </ligand>
</feature>
<feature type="binding site" evidence="2">
    <location>
        <position position="77"/>
    </location>
    <ligand>
        <name>UDP-alpha-D-glucose</name>
        <dbReference type="ChEBI" id="CHEBI:58885"/>
    </ligand>
</feature>
<feature type="binding site" evidence="2">
    <location>
        <position position="86"/>
    </location>
    <ligand>
        <name>UDP-alpha-D-glucose</name>
        <dbReference type="ChEBI" id="CHEBI:58885"/>
    </ligand>
</feature>
<feature type="binding site" evidence="5 7 9 18 20 24 25 29 31">
    <location>
        <position position="102"/>
    </location>
    <ligand>
        <name>Mn(2+)</name>
        <dbReference type="ChEBI" id="CHEBI:29035"/>
    </ligand>
</feature>
<feature type="binding site" evidence="7 20">
    <location>
        <position position="102"/>
    </location>
    <ligand>
        <name>UDP</name>
        <dbReference type="ChEBI" id="CHEBI:58223"/>
    </ligand>
</feature>
<feature type="binding site" evidence="5 7 9 18 24 25 31">
    <location>
        <position position="102"/>
    </location>
    <ligand>
        <name>UDP-alpha-D-glucose</name>
        <dbReference type="ChEBI" id="CHEBI:58885"/>
    </ligand>
</feature>
<feature type="binding site" evidence="7 9 20 29">
    <location>
        <position position="103"/>
    </location>
    <ligand>
        <name>UDP</name>
        <dbReference type="ChEBI" id="CHEBI:58223"/>
    </ligand>
</feature>
<feature type="binding site" evidence="5 7 9 18 24 25 31">
    <location>
        <position position="103"/>
    </location>
    <ligand>
        <name>UDP-alpha-D-glucose</name>
        <dbReference type="ChEBI" id="CHEBI:58885"/>
    </ligand>
</feature>
<feature type="binding site" evidence="5 7 9 18 20 24 25 29 31">
    <location>
        <position position="104"/>
    </location>
    <ligand>
        <name>Mn(2+)</name>
        <dbReference type="ChEBI" id="CHEBI:29035"/>
    </ligand>
</feature>
<feature type="binding site" evidence="7 9 20 29">
    <location>
        <position position="104"/>
    </location>
    <ligand>
        <name>UDP</name>
        <dbReference type="ChEBI" id="CHEBI:58223"/>
    </ligand>
</feature>
<feature type="binding site" evidence="5 7 9 18 24 25 31">
    <location>
        <position position="104"/>
    </location>
    <ligand>
        <name>UDP-alpha-D-glucose</name>
        <dbReference type="ChEBI" id="CHEBI:58885"/>
    </ligand>
</feature>
<feature type="binding site" evidence="5 7 9 18 24 25 31">
    <location>
        <position position="133"/>
    </location>
    <ligand>
        <name>UDP-alpha-D-glucose</name>
        <dbReference type="ChEBI" id="CHEBI:58885"/>
    </ligand>
</feature>
<feature type="binding site" evidence="9 31">
    <location>
        <position position="134"/>
    </location>
    <ligand>
        <name>UDP-alpha-D-glucose</name>
        <dbReference type="ChEBI" id="CHEBI:58885"/>
    </ligand>
</feature>
<feature type="binding site" evidence="2">
    <location>
        <position position="160"/>
    </location>
    <ligand>
        <name>UDP-alpha-D-glucose</name>
        <dbReference type="ChEBI" id="CHEBI:58885"/>
    </ligand>
</feature>
<feature type="binding site" evidence="2">
    <location>
        <position position="163"/>
    </location>
    <ligand>
        <name>UDP-alpha-D-glucose</name>
        <dbReference type="ChEBI" id="CHEBI:58885"/>
    </ligand>
</feature>
<feature type="binding site" evidence="5 7 9 18 24 25 31">
    <location>
        <position position="164"/>
    </location>
    <ligand>
        <name>UDP-alpha-D-glucose</name>
        <dbReference type="ChEBI" id="CHEBI:58885"/>
    </ligand>
</feature>
<feature type="binding site" evidence="5 7 9 18 20 24 25 29 31">
    <location>
        <position position="212"/>
    </location>
    <ligand>
        <name>Mn(2+)</name>
        <dbReference type="ChEBI" id="CHEBI:29035"/>
    </ligand>
</feature>
<feature type="binding site" evidence="7 20">
    <location>
        <position position="212"/>
    </location>
    <ligand>
        <name>UDP</name>
        <dbReference type="ChEBI" id="CHEBI:58223"/>
    </ligand>
</feature>
<feature type="binding site" evidence="7 20">
    <location>
        <position position="215"/>
    </location>
    <ligand>
        <name>UDP</name>
        <dbReference type="ChEBI" id="CHEBI:58223"/>
    </ligand>
</feature>
<feature type="binding site" evidence="5 9 18 31">
    <location>
        <position position="215"/>
    </location>
    <ligand>
        <name>UDP-alpha-D-glucose</name>
        <dbReference type="ChEBI" id="CHEBI:58885"/>
    </ligand>
</feature>
<feature type="binding site" evidence="7 9 20 29">
    <location>
        <position position="218"/>
    </location>
    <ligand>
        <name>UDP</name>
        <dbReference type="ChEBI" id="CHEBI:58223"/>
    </ligand>
</feature>
<feature type="binding site" evidence="5 7 9 18 24 25 31">
    <location>
        <position position="218"/>
    </location>
    <ligand>
        <name>UDP-alpha-D-glucose</name>
        <dbReference type="ChEBI" id="CHEBI:58885"/>
    </ligand>
</feature>
<feature type="site" description="Important for catalytic activity" evidence="4">
    <location>
        <position position="86"/>
    </location>
</feature>
<feature type="modified residue" description="N-acetylthreonine" evidence="2">
    <location>
        <position position="2"/>
    </location>
</feature>
<feature type="modified residue" description="Phosphoserine; by PKA; in vitro" evidence="12">
    <location>
        <position position="44"/>
    </location>
</feature>
<feature type="glycosylation site" description="O-linked (Glc...) tyrosine" evidence="14">
    <location>
        <position position="195"/>
    </location>
</feature>
<feature type="mutagenesis site" description="Loss of autoglucosylation." evidence="9">
    <original>T</original>
    <variation>M</variation>
    <location>
        <position position="83"/>
    </location>
</feature>
<feature type="mutagenesis site" description="No effect on autoglucosylation." evidence="9">
    <original>T</original>
    <variation>S</variation>
    <location>
        <position position="83"/>
    </location>
</feature>
<feature type="mutagenesis site" description="Nearly abolishes enzyme activity." evidence="4">
    <original>K</original>
    <variation>Q</variation>
    <location>
        <position position="86"/>
    </location>
</feature>
<feature type="mutagenesis site" description="Reduced trans-glucosylation activity by at least 260-fold and reduced UDP-glucose hydrolytic activity by 4 to 14-fold." evidence="7">
    <original>D</original>
    <variation>N</variation>
    <variation>S</variation>
    <location>
        <position position="160"/>
    </location>
</feature>
<feature type="mutagenesis site" description="Loss of self-glucosylation activity and ability to trans-glucosylate maltose. Reduces UDP-glucose hydrolytic activity by at least 190-fold." evidence="7">
    <original>D</original>
    <variation>N</variation>
    <location>
        <position position="163"/>
    </location>
</feature>
<feature type="mutagenesis site" description="Loss of self-glucosylation activity and 18 to 30-fold reduction in its ability to trans-glucosylate maltose. Reduces UDP-glucose hydrolytic activity by at least 190-fold." evidence="7">
    <original>D</original>
    <variation>S</variation>
    <location>
        <position position="163"/>
    </location>
</feature>
<feature type="mutagenesis site" description="Loss of self-glucosylation. No loss of catalytic activity." evidence="4 8 13 14">
    <original>Y</original>
    <variation>F</variation>
    <variation>T</variation>
    <location>
        <position position="195"/>
    </location>
</feature>
<feature type="sequence conflict" description="In Ref. 4; AA sequence." evidence="16" ref="4">
    <original>T</original>
    <variation>L</variation>
    <location>
        <position position="39"/>
    </location>
</feature>
<feature type="sequence conflict" description="In Ref. 2; AA sequence." evidence="16" ref="2">
    <original>C</original>
    <variation>S</variation>
    <location>
        <position position="89"/>
    </location>
</feature>
<feature type="sequence conflict" description="In Ref. 2; AA sequence." evidence="16" ref="2">
    <original>C</original>
    <variation>L</variation>
    <location>
        <position position="98"/>
    </location>
</feature>
<feature type="strand" evidence="32">
    <location>
        <begin position="3"/>
        <end position="12"/>
    </location>
</feature>
<feature type="helix" evidence="32">
    <location>
        <begin position="13"/>
        <end position="28"/>
    </location>
</feature>
<feature type="strand" evidence="32">
    <location>
        <begin position="33"/>
        <end position="39"/>
    </location>
</feature>
<feature type="helix" evidence="32">
    <location>
        <begin position="45"/>
        <end position="54"/>
    </location>
</feature>
<feature type="strand" evidence="32">
    <location>
        <begin position="56"/>
        <end position="60"/>
    </location>
</feature>
<feature type="helix" evidence="32">
    <location>
        <begin position="71"/>
        <end position="76"/>
    </location>
</feature>
<feature type="helix" evidence="32">
    <location>
        <begin position="78"/>
        <end position="80"/>
    </location>
</feature>
<feature type="helix" evidence="32">
    <location>
        <begin position="81"/>
        <end position="86"/>
    </location>
</feature>
<feature type="helix" evidence="32">
    <location>
        <begin position="87"/>
        <end position="91"/>
    </location>
</feature>
<feature type="strand" evidence="32">
    <location>
        <begin position="96"/>
        <end position="101"/>
    </location>
</feature>
<feature type="strand" evidence="32">
    <location>
        <begin position="105"/>
        <end position="107"/>
    </location>
</feature>
<feature type="helix" evidence="32">
    <location>
        <begin position="112"/>
        <end position="116"/>
    </location>
</feature>
<feature type="strand" evidence="32">
    <location>
        <begin position="119"/>
        <end position="124"/>
    </location>
</feature>
<feature type="strand" evidence="32">
    <location>
        <begin position="126"/>
        <end position="128"/>
    </location>
</feature>
<feature type="strand" evidence="32">
    <location>
        <begin position="131"/>
        <end position="139"/>
    </location>
</feature>
<feature type="helix" evidence="32">
    <location>
        <begin position="143"/>
        <end position="155"/>
    </location>
</feature>
<feature type="strand" evidence="35">
    <location>
        <begin position="159"/>
        <end position="162"/>
    </location>
</feature>
<feature type="helix" evidence="32">
    <location>
        <begin position="163"/>
        <end position="170"/>
    </location>
</feature>
<feature type="turn" evidence="32">
    <location>
        <begin position="171"/>
        <end position="176"/>
    </location>
</feature>
<feature type="helix" evidence="32">
    <location>
        <begin position="179"/>
        <end position="181"/>
    </location>
</feature>
<feature type="helix" evidence="32">
    <location>
        <begin position="185"/>
        <end position="187"/>
    </location>
</feature>
<feature type="strand" evidence="32">
    <location>
        <begin position="188"/>
        <end position="190"/>
    </location>
</feature>
<feature type="helix" evidence="32">
    <location>
        <begin position="193"/>
        <end position="196"/>
    </location>
</feature>
<feature type="helix" evidence="32">
    <location>
        <begin position="198"/>
        <end position="204"/>
    </location>
</feature>
<feature type="helix" evidence="32">
    <location>
        <begin position="205"/>
        <end position="207"/>
    </location>
</feature>
<feature type="strand" evidence="32">
    <location>
        <begin position="209"/>
        <end position="212"/>
    </location>
</feature>
<feature type="strand" evidence="33">
    <location>
        <begin position="215"/>
        <end position="217"/>
    </location>
</feature>
<feature type="helix" evidence="32">
    <location>
        <begin position="219"/>
        <end position="221"/>
    </location>
</feature>
<feature type="strand" evidence="36">
    <location>
        <begin position="222"/>
        <end position="225"/>
    </location>
</feature>
<feature type="turn" evidence="32">
    <location>
        <begin position="226"/>
        <end position="229"/>
    </location>
</feature>
<feature type="strand" evidence="36">
    <location>
        <begin position="230"/>
        <end position="232"/>
    </location>
</feature>
<feature type="helix" evidence="32">
    <location>
        <begin position="243"/>
        <end position="255"/>
    </location>
</feature>
<feature type="helix" evidence="32">
    <location>
        <begin position="257"/>
        <end position="261"/>
    </location>
</feature>
<feature type="helix" evidence="34">
    <location>
        <begin position="263"/>
        <end position="265"/>
    </location>
</feature>
<comment type="function">
    <text evidence="4 6 7 8 9 10 13 14">Glycogenin participates in the glycogen biosynthetic process along with glycogen synthase and glycogen branching enzyme. It catalyzes the formation of a short alpha (1,4)-glucosyl chain covalently attached via a glucose 1-O-tyrosyl linkage to internal tyrosine residues and these chains act as primers for the elongation reaction catalyzed by glycogen synthase.</text>
</comment>
<comment type="catalytic activity">
    <reaction evidence="4 6 7 8 9 10 13 14">
        <text>L-tyrosyl-[glycogenin] + UDP-alpha-D-glucose = alpha-D-glucosyl-L-tyrosyl-[glycogenin] + UDP + H(+)</text>
        <dbReference type="Rhea" id="RHEA:23360"/>
        <dbReference type="Rhea" id="RHEA-COMP:14604"/>
        <dbReference type="Rhea" id="RHEA-COMP:14605"/>
        <dbReference type="ChEBI" id="CHEBI:15378"/>
        <dbReference type="ChEBI" id="CHEBI:46858"/>
        <dbReference type="ChEBI" id="CHEBI:58223"/>
        <dbReference type="ChEBI" id="CHEBI:58885"/>
        <dbReference type="ChEBI" id="CHEBI:140573"/>
        <dbReference type="EC" id="2.4.1.186"/>
    </reaction>
    <physiologicalReaction direction="left-to-right" evidence="4 6 7 8 9 10 13 14">
        <dbReference type="Rhea" id="RHEA:23361"/>
    </physiologicalReaction>
</comment>
<comment type="catalytic activity">
    <reaction evidence="4 6 7 8 9 10 13 14">
        <text>[1,4-alpha-D-glucosyl](n)-L-tyrosyl-[glycogenin] + UDP-alpha-D-glucose = [1,4-alpha-D-glucosyl](n+1)-L-tyrosyl-[glycogenin] + UDP + H(+)</text>
        <dbReference type="Rhea" id="RHEA:56560"/>
        <dbReference type="Rhea" id="RHEA-COMP:14606"/>
        <dbReference type="Rhea" id="RHEA-COMP:14607"/>
        <dbReference type="ChEBI" id="CHEBI:15378"/>
        <dbReference type="ChEBI" id="CHEBI:58223"/>
        <dbReference type="ChEBI" id="CHEBI:58885"/>
        <dbReference type="ChEBI" id="CHEBI:140574"/>
        <dbReference type="EC" id="2.4.1.186"/>
    </reaction>
    <physiologicalReaction direction="left-to-right" evidence="4 6 7 8 9 10 13 14">
        <dbReference type="Rhea" id="RHEA:56561"/>
    </physiologicalReaction>
</comment>
<comment type="cofactor">
    <cofactor evidence="5 6 7 8 9 10 14">
        <name>Mn(2+)</name>
        <dbReference type="ChEBI" id="CHEBI:29035"/>
    </cofactor>
    <text evidence="5">Divalent metal ions. Required for self-glucosylation. Manganese is the most effective.</text>
</comment>
<comment type="pathway">
    <text evidence="6 7 10">Glycan biosynthesis; glycogen biosynthesis.</text>
</comment>
<comment type="subunit">
    <text evidence="2 3 5 7 8 9">Part of the GYS1-GYG1 complex, a heterooctamer composed of a tetramer of GYS1 and 2 dimers of GYG1, where each GYS1 protomer binds to one GYG1 subunit (via GYG1 C-terminus); the GYS1 tetramer may dissociate from GYG1 dimers to continue glycogen polymerization on its own (By similarity) (PubMed:12051921, PubMed:15849187, PubMed:22128147, PubMed:22226635). May also form a heterooctamer complex with GYS2 (via GYG1 C-terminus) (By similarity).</text>
</comment>
<comment type="subcellular location">
    <subcellularLocation>
        <location evidence="15">Cytoplasm</location>
    </subcellularLocation>
    <subcellularLocation>
        <location evidence="15">Nucleus</location>
    </subcellularLocation>
    <text evidence="1 15">Localizes to glycogen granules (glycosomes) in the cytoplasm (By similarity). Cytosolic localization is dependent on the actin cytoskeleton (PubMed:9409751).</text>
</comment>
<comment type="tissue specificity">
    <text evidence="6">Detected in heart, skeletal muscle, brain and testis, and at lower levels in kidney.</text>
</comment>
<comment type="PTM">
    <text evidence="4 8 9 13 14">Self-glycosylated by the transfer of glucose residues from UDP-glucose to itself, forming an alpha-1,4-glycan of around 10 residues attached to Tyr-195.</text>
</comment>
<comment type="PTM">
    <text evidence="12">Phosphorylated.</text>
</comment>
<comment type="similarity">
    <text evidence="16">Belongs to the glycosyltransferase 8 family. Glycogenin subfamily.</text>
</comment>
<proteinExistence type="evidence at protein level"/>
<reference key="1">
    <citation type="journal article" date="1992" name="J. Biol. Chem.">
        <title>Rabbit skeletal muscle glycogenin. Molecular cloning and production of fully functional protein in Escherichia coli.</title>
        <authorList>
            <person name="Viskupic E."/>
            <person name="Cao Y."/>
            <person name="Zhang W."/>
            <person name="Cheng C."/>
            <person name="Depaoli-Roach A.A."/>
            <person name="Roach P.J."/>
        </authorList>
    </citation>
    <scope>NUCLEOTIDE SEQUENCE [MRNA]</scope>
    <scope>PARTIAL PROTEIN SEQUENCE</scope>
    <scope>FUNCTION</scope>
    <scope>CATALYTIC ACTIVITY</scope>
    <scope>COFACTOR</scope>
    <scope>PATHWAY</scope>
    <scope>TISSUE SPECIFICITY</scope>
    <source>
        <tissue>Skeletal muscle</tissue>
    </source>
</reference>
<reference key="2">
    <citation type="journal article" date="1989" name="Eur. J. Biochem.">
        <title>The amino acid sequence of rabbit skeletal muscle glycogenin.</title>
        <authorList>
            <person name="Campbell D.G."/>
            <person name="Cohen P."/>
        </authorList>
    </citation>
    <scope>PROTEIN SEQUENCE OF 2-333</scope>
    <source>
        <strain>New Zealand white</strain>
        <tissue>Skeletal muscle</tissue>
    </source>
</reference>
<reference key="3">
    <citation type="journal article" date="1989" name="Eur. J. Biochem.">
        <title>Structural and functional studies on rabbit liver glycogenin.</title>
        <authorList>
            <person name="Smythe C."/>
            <person name="Villar-Palasi C."/>
            <person name="Cohen P."/>
        </authorList>
    </citation>
    <scope>PROTEIN SEQUENCE OF 35-48; 182-202; 210-227 AND 308-325</scope>
    <scope>FUNCTION</scope>
    <scope>CATALYTIC ACTIVITY</scope>
    <scope>PATHWAY</scope>
    <scope>COFACTOR</scope>
    <source>
        <tissue>Liver</tissue>
    </source>
</reference>
<reference key="4">
    <citation type="journal article" date="1988" name="BioFactors">
        <title>The occurrence of serine phosphate in glycogenin: a possible regulatory site.</title>
        <authorList>
            <person name="Lomako J."/>
            <person name="Whelan W.J."/>
        </authorList>
    </citation>
    <scope>PROTEIN SEQUENCE OF 35-48</scope>
    <scope>PHOSPHORYLATION AT SER-44</scope>
</reference>
<reference key="5">
    <citation type="journal article" date="1994" name="FEBS Lett.">
        <title>Tyrosine-194 of glycogenin undergoes autocatalytic glucosylation but is not essential for catalytic function and activity.</title>
        <authorList>
            <person name="Alonso M.D."/>
            <person name="Lomako J."/>
            <person name="Lomako W.M."/>
            <person name="Whelan W.J."/>
        </authorList>
    </citation>
    <scope>FUNCTION</scope>
    <scope>CATALYTIC ACTIVITY</scope>
    <scope>COFACTOR</scope>
    <scope>GLYCOSYLATION AT TYR-195</scope>
    <scope>MUTAGENESIS OF TYR-195</scope>
</reference>
<reference key="6">
    <citation type="journal article" date="1995" name="Arch. Biochem. Biophys.">
        <title>Mechanism of glycogenin self-glucosylation.</title>
        <authorList>
            <person name="Cao Y."/>
            <person name="Steinrauf L.K."/>
            <person name="Roach P.J."/>
        </authorList>
    </citation>
    <scope>FUNCTION</scope>
    <scope>CATALYTIC ACTIVITY</scope>
    <scope>GLYCOSYLATION AT TYR-195</scope>
    <scope>MUTAGENESIS OF TYR-195</scope>
</reference>
<reference key="7">
    <citation type="journal article" date="1997" name="FEBS Lett.">
        <title>Glycogenin, the primer of glycogen synthesis, binds to actin.</title>
        <authorList>
            <person name="Baque S."/>
            <person name="Guinovart J.J."/>
            <person name="Ferrer J.C."/>
        </authorList>
    </citation>
    <scope>SUBCELLULAR LOCATION</scope>
</reference>
<reference key="8">
    <citation type="journal article" date="1999" name="Arch. Biochem. Biophys.">
        <title>Self-glucosylation of glycogenin, the initiator of glycogen biosynthesis, involves an inter-subunit reaction.</title>
        <authorList>
            <person name="Lin A."/>
            <person name="Mu J."/>
            <person name="Yang J."/>
            <person name="Roach P.J."/>
        </authorList>
    </citation>
    <scope>FUNCTION</scope>
    <scope>CATALYTIC ACTIVITY</scope>
    <scope>GLYCOSYLATION AT TYR-195</scope>
    <scope>MUTAGENESIS OF LYS-86 AND TYR-195</scope>
</reference>
<reference evidence="17 18 19" key="9">
    <citation type="journal article" date="2002" name="J. Mol. Biol.">
        <title>Crystal structure of the autocatalytic initiator of glycogen biosynthesis, glycogenin.</title>
        <authorList>
            <person name="Gibbons B.J."/>
            <person name="Roach P.J."/>
            <person name="Hurley T.D."/>
        </authorList>
    </citation>
    <scope>X-RAY CRYSTALLOGRAPHY (1.9 ANGSTROMS) IN COMPLEX WITH UDP-GLUCOSE AND MANGANESE IONS</scope>
    <scope>SUBUNIT</scope>
    <scope>COFACTOR</scope>
</reference>
<reference evidence="20 21 22 23 24 25" key="10">
    <citation type="journal article" date="2005" name="J. Biol. Chem.">
        <title>Requirements for catalysis in mammalian glycogenin.</title>
        <authorList>
            <person name="Hurley T.D."/>
            <person name="Stout S."/>
            <person name="Miner E."/>
            <person name="Zhou J."/>
            <person name="Roach P.J."/>
        </authorList>
    </citation>
    <scope>X-RAY CRYSTALLOGRAPHY (1.98 ANGSTROMS) IN COMPLEX WITH MANGANESE; UDP AND UDP-ALPHA-D-GLUCOSE</scope>
    <scope>FUNCTION</scope>
    <scope>CATALYTIC ACTIVITY</scope>
    <scope>PATHWAY</scope>
    <scope>COFACTOR</scope>
    <scope>SUBUNIT</scope>
    <scope>MUTAGENESIS OF ASP-160 AND ASP-163</scope>
</reference>
<reference evidence="28 29 30 31" key="11">
    <citation type="journal article" date="2012" name="FEBS Lett.">
        <title>Structural and biochemical insight into glycogenin inactivation by the glycogenosis-causing T82M mutation.</title>
        <authorList>
            <person name="Carrizo M.E."/>
            <person name="Romero J.M."/>
            <person name="Issoglio F.M."/>
            <person name="Curtino J.A."/>
        </authorList>
    </citation>
    <scope>X-RAY CRYSTALLOGRAPHY (2.00 ANGSTROMS) OF 1-271 OF WILD-TYPE AND MUTANT MET-83 IN COMPLEX WITH MANGANESE; UDP AND UDP-ALPHA-D-GLUCOSE</scope>
    <scope>FUNCTION</scope>
    <scope>CATALYTIC ACTIVITY</scope>
    <scope>COFACTOR</scope>
    <scope>SUBUNIT</scope>
    <scope>MUTAGENESIS OF THR-83</scope>
</reference>
<reference evidence="26 27" key="12">
    <citation type="journal article" date="2012" name="J. Biol. Chem.">
        <title>Mechanisms of monomeric and dimeric glycogenin autoglucosylation.</title>
        <authorList>
            <person name="Issoglio F.M."/>
            <person name="Carrizo M.E."/>
            <person name="Romero J.M."/>
            <person name="Curtino J.A."/>
        </authorList>
    </citation>
    <scope>X-RAY CRYSTALLOGRAPHY (2.10 ANGSTROMS) OF 1-271</scope>
    <scope>FUNCTION</scope>
    <scope>CATALYTIC ACTIVITY</scope>
    <scope>COFACTOR</scope>
    <scope>SUBUNIT</scope>
    <scope>MUTAGENESIS OF TYR-195</scope>
    <scope>GLYCOSYLATION AT TYR-195</scope>
</reference>
<protein>
    <recommendedName>
        <fullName>Glycogenin-1</fullName>
        <shortName>GN-1</shortName>
        <shortName>GN1</shortName>
        <ecNumber evidence="6 7 8 9 10">2.4.1.186</ecNumber>
    </recommendedName>
</protein>
<dbReference type="EC" id="2.4.1.186" evidence="6 7 8 9 10"/>
<dbReference type="EMBL" id="L01791">
    <property type="protein sequence ID" value="AAA31404.1"/>
    <property type="molecule type" value="mRNA"/>
</dbReference>
<dbReference type="PIR" id="A45094">
    <property type="entry name" value="A45094"/>
</dbReference>
<dbReference type="RefSeq" id="NP_001075710.1">
    <property type="nucleotide sequence ID" value="NM_001082241.1"/>
</dbReference>
<dbReference type="PDB" id="1LL0">
    <property type="method" value="X-ray"/>
    <property type="resolution" value="3.43 A"/>
    <property type="chains" value="A/B/C/D/E/F/G/H/I/J=1-333"/>
</dbReference>
<dbReference type="PDB" id="1LL2">
    <property type="method" value="X-ray"/>
    <property type="resolution" value="1.90 A"/>
    <property type="chains" value="A=1-333"/>
</dbReference>
<dbReference type="PDB" id="1LL3">
    <property type="method" value="X-ray"/>
    <property type="resolution" value="1.90 A"/>
    <property type="chains" value="A=1-333"/>
</dbReference>
<dbReference type="PDB" id="1ZCT">
    <property type="method" value="X-ray"/>
    <property type="resolution" value="2.60 A"/>
    <property type="chains" value="A/B=1-270"/>
</dbReference>
<dbReference type="PDB" id="1ZCU">
    <property type="method" value="X-ray"/>
    <property type="resolution" value="2.00 A"/>
    <property type="chains" value="A=1-333"/>
</dbReference>
<dbReference type="PDB" id="1ZCV">
    <property type="method" value="X-ray"/>
    <property type="resolution" value="1.98 A"/>
    <property type="chains" value="A=1-333"/>
</dbReference>
<dbReference type="PDB" id="1ZCY">
    <property type="method" value="X-ray"/>
    <property type="resolution" value="1.99 A"/>
    <property type="chains" value="A=1-333"/>
</dbReference>
<dbReference type="PDB" id="1ZDF">
    <property type="method" value="X-ray"/>
    <property type="resolution" value="2.45 A"/>
    <property type="chains" value="A=1-333"/>
</dbReference>
<dbReference type="PDB" id="1ZDG">
    <property type="method" value="X-ray"/>
    <property type="resolution" value="2.30 A"/>
    <property type="chains" value="A=1-333"/>
</dbReference>
<dbReference type="PDB" id="3USQ">
    <property type="method" value="X-ray"/>
    <property type="resolution" value="2.40 A"/>
    <property type="chains" value="A=1-271"/>
</dbReference>
<dbReference type="PDB" id="3USR">
    <property type="method" value="X-ray"/>
    <property type="resolution" value="2.10 A"/>
    <property type="chains" value="A=1-271"/>
</dbReference>
<dbReference type="PDB" id="3V8Y">
    <property type="method" value="X-ray"/>
    <property type="resolution" value="2.15 A"/>
    <property type="chains" value="A=1-271"/>
</dbReference>
<dbReference type="PDB" id="3V8Z">
    <property type="method" value="X-ray"/>
    <property type="resolution" value="2.20 A"/>
    <property type="chains" value="A=1-271"/>
</dbReference>
<dbReference type="PDB" id="3V90">
    <property type="method" value="X-ray"/>
    <property type="resolution" value="2.00 A"/>
    <property type="chains" value="A=1-271"/>
</dbReference>
<dbReference type="PDB" id="3V91">
    <property type="method" value="X-ray"/>
    <property type="resolution" value="2.00 A"/>
    <property type="chains" value="A=1-271"/>
</dbReference>
<dbReference type="PDBsum" id="1LL0"/>
<dbReference type="PDBsum" id="1LL2"/>
<dbReference type="PDBsum" id="1LL3"/>
<dbReference type="PDBsum" id="1ZCT"/>
<dbReference type="PDBsum" id="1ZCU"/>
<dbReference type="PDBsum" id="1ZCV"/>
<dbReference type="PDBsum" id="1ZCY"/>
<dbReference type="PDBsum" id="1ZDF"/>
<dbReference type="PDBsum" id="1ZDG"/>
<dbReference type="PDBsum" id="3USQ"/>
<dbReference type="PDBsum" id="3USR"/>
<dbReference type="PDBsum" id="3V8Y"/>
<dbReference type="PDBsum" id="3V8Z"/>
<dbReference type="PDBsum" id="3V90"/>
<dbReference type="PDBsum" id="3V91"/>
<dbReference type="SMR" id="P13280"/>
<dbReference type="BioGRID" id="1172081">
    <property type="interactions" value="2"/>
</dbReference>
<dbReference type="CORUM" id="P13280"/>
<dbReference type="FunCoup" id="P13280">
    <property type="interactions" value="320"/>
</dbReference>
<dbReference type="STRING" id="9986.ENSOCUP00000028932"/>
<dbReference type="CAZy" id="GT8">
    <property type="family name" value="Glycosyltransferase Family 8"/>
</dbReference>
<dbReference type="GlyCosmos" id="P13280">
    <property type="glycosylation" value="1 site, No reported glycans"/>
</dbReference>
<dbReference type="iPTMnet" id="P13280"/>
<dbReference type="PaxDb" id="9986-ENSOCUP00000019444"/>
<dbReference type="GeneID" id="100009058"/>
<dbReference type="KEGG" id="ocu:100009058"/>
<dbReference type="CTD" id="2992"/>
<dbReference type="eggNOG" id="KOG1950">
    <property type="taxonomic scope" value="Eukaryota"/>
</dbReference>
<dbReference type="InParanoid" id="P13280"/>
<dbReference type="OrthoDB" id="2014201at2759"/>
<dbReference type="BRENDA" id="2.4.1.186">
    <property type="organism ID" value="1749"/>
</dbReference>
<dbReference type="UniPathway" id="UPA00164"/>
<dbReference type="EvolutionaryTrace" id="P13280"/>
<dbReference type="Proteomes" id="UP000001811">
    <property type="component" value="Unplaced"/>
</dbReference>
<dbReference type="GO" id="GO:0005737">
    <property type="term" value="C:cytoplasm"/>
    <property type="evidence" value="ECO:0000314"/>
    <property type="project" value="UniProtKB"/>
</dbReference>
<dbReference type="GO" id="GO:0005634">
    <property type="term" value="C:nucleus"/>
    <property type="evidence" value="ECO:0007669"/>
    <property type="project" value="UniProtKB-SubCell"/>
</dbReference>
<dbReference type="GO" id="GO:0008466">
    <property type="term" value="F:glycogenin glucosyltransferase activity"/>
    <property type="evidence" value="ECO:0000314"/>
    <property type="project" value="UniProtKB"/>
</dbReference>
<dbReference type="GO" id="GO:0030145">
    <property type="term" value="F:manganese ion binding"/>
    <property type="evidence" value="ECO:0000314"/>
    <property type="project" value="UniProtKB"/>
</dbReference>
<dbReference type="GO" id="GO:0042803">
    <property type="term" value="F:protein homodimerization activity"/>
    <property type="evidence" value="ECO:0000250"/>
    <property type="project" value="UniProtKB"/>
</dbReference>
<dbReference type="GO" id="GO:0005978">
    <property type="term" value="P:glycogen biosynthetic process"/>
    <property type="evidence" value="ECO:0000314"/>
    <property type="project" value="UniProtKB"/>
</dbReference>
<dbReference type="CDD" id="cd02537">
    <property type="entry name" value="GT8_Glycogenin"/>
    <property type="match status" value="1"/>
</dbReference>
<dbReference type="FunFam" id="3.90.550.10:FF:000025">
    <property type="entry name" value="Glycogenin-1 isoform 1"/>
    <property type="match status" value="1"/>
</dbReference>
<dbReference type="Gene3D" id="3.90.550.10">
    <property type="entry name" value="Spore Coat Polysaccharide Biosynthesis Protein SpsA, Chain A"/>
    <property type="match status" value="1"/>
</dbReference>
<dbReference type="InterPro" id="IPR002495">
    <property type="entry name" value="Glyco_trans_8"/>
</dbReference>
<dbReference type="InterPro" id="IPR050587">
    <property type="entry name" value="GNT1/Glycosyltrans_8"/>
</dbReference>
<dbReference type="InterPro" id="IPR029044">
    <property type="entry name" value="Nucleotide-diphossugar_trans"/>
</dbReference>
<dbReference type="PANTHER" id="PTHR11183">
    <property type="entry name" value="GLYCOGENIN SUBFAMILY MEMBER"/>
    <property type="match status" value="1"/>
</dbReference>
<dbReference type="Pfam" id="PF01501">
    <property type="entry name" value="Glyco_transf_8"/>
    <property type="match status" value="1"/>
</dbReference>
<dbReference type="SUPFAM" id="SSF53448">
    <property type="entry name" value="Nucleotide-diphospho-sugar transferases"/>
    <property type="match status" value="1"/>
</dbReference>